<protein>
    <recommendedName>
        <fullName evidence="2">D-alanine--D-alanine ligase</fullName>
        <ecNumber evidence="2">6.3.2.4</ecNumber>
    </recommendedName>
    <alternativeName>
        <fullName evidence="2">D-Ala-D-Ala ligase</fullName>
    </alternativeName>
    <alternativeName>
        <fullName evidence="2">D-alanylalanine synthetase</fullName>
    </alternativeName>
</protein>
<feature type="chain" id="PRO_0000341078" description="D-alanine--D-alanine ligase">
    <location>
        <begin position="1"/>
        <end position="312"/>
    </location>
</feature>
<feature type="domain" description="ATP-grasp" evidence="2">
    <location>
        <begin position="108"/>
        <end position="308"/>
    </location>
</feature>
<feature type="binding site" evidence="2">
    <location>
        <begin position="138"/>
        <end position="193"/>
    </location>
    <ligand>
        <name>ATP</name>
        <dbReference type="ChEBI" id="CHEBI:30616"/>
    </ligand>
</feature>
<feature type="binding site" evidence="2">
    <location>
        <position position="262"/>
    </location>
    <ligand>
        <name>Mg(2+)</name>
        <dbReference type="ChEBI" id="CHEBI:18420"/>
        <label>1</label>
    </ligand>
</feature>
<feature type="binding site" evidence="2">
    <location>
        <position position="275"/>
    </location>
    <ligand>
        <name>Mg(2+)</name>
        <dbReference type="ChEBI" id="CHEBI:18420"/>
        <label>1</label>
    </ligand>
</feature>
<feature type="binding site" evidence="2">
    <location>
        <position position="275"/>
    </location>
    <ligand>
        <name>Mg(2+)</name>
        <dbReference type="ChEBI" id="CHEBI:18420"/>
        <label>2</label>
    </ligand>
</feature>
<feature type="binding site" evidence="2">
    <location>
        <position position="277"/>
    </location>
    <ligand>
        <name>Mg(2+)</name>
        <dbReference type="ChEBI" id="CHEBI:18420"/>
        <label>2</label>
    </ligand>
</feature>
<accession>Q2SZI1</accession>
<organism>
    <name type="scientific">Burkholderia thailandensis (strain ATCC 700388 / DSM 13276 / CCUG 48851 / CIP 106301 / E264)</name>
    <dbReference type="NCBI Taxonomy" id="271848"/>
    <lineage>
        <taxon>Bacteria</taxon>
        <taxon>Pseudomonadati</taxon>
        <taxon>Pseudomonadota</taxon>
        <taxon>Betaproteobacteria</taxon>
        <taxon>Burkholderiales</taxon>
        <taxon>Burkholderiaceae</taxon>
        <taxon>Burkholderia</taxon>
        <taxon>pseudomallei group</taxon>
    </lineage>
</organism>
<reference key="1">
    <citation type="journal article" date="2005" name="BMC Genomics">
        <title>Bacterial genome adaptation to niches: divergence of the potential virulence genes in three Burkholderia species of different survival strategies.</title>
        <authorList>
            <person name="Kim H.S."/>
            <person name="Schell M.A."/>
            <person name="Yu Y."/>
            <person name="Ulrich R.L."/>
            <person name="Sarria S.H."/>
            <person name="Nierman W.C."/>
            <person name="DeShazer D."/>
        </authorList>
    </citation>
    <scope>NUCLEOTIDE SEQUENCE [LARGE SCALE GENOMIC DNA]</scope>
    <source>
        <strain>ATCC 700388 / DSM 13276 / CCUG 48851 / CIP 106301 / E264</strain>
    </source>
</reference>
<comment type="function">
    <text evidence="2">Cell wall formation.</text>
</comment>
<comment type="catalytic activity">
    <reaction evidence="2">
        <text>2 D-alanine + ATP = D-alanyl-D-alanine + ADP + phosphate + H(+)</text>
        <dbReference type="Rhea" id="RHEA:11224"/>
        <dbReference type="ChEBI" id="CHEBI:15378"/>
        <dbReference type="ChEBI" id="CHEBI:30616"/>
        <dbReference type="ChEBI" id="CHEBI:43474"/>
        <dbReference type="ChEBI" id="CHEBI:57416"/>
        <dbReference type="ChEBI" id="CHEBI:57822"/>
        <dbReference type="ChEBI" id="CHEBI:456216"/>
        <dbReference type="EC" id="6.3.2.4"/>
    </reaction>
</comment>
<comment type="cofactor">
    <cofactor evidence="1">
        <name>Mg(2+)</name>
        <dbReference type="ChEBI" id="CHEBI:18420"/>
    </cofactor>
    <cofactor evidence="1">
        <name>Mn(2+)</name>
        <dbReference type="ChEBI" id="CHEBI:29035"/>
    </cofactor>
    <text evidence="1">Binds 2 magnesium or manganese ions per subunit.</text>
</comment>
<comment type="pathway">
    <text evidence="2">Cell wall biogenesis; peptidoglycan biosynthesis.</text>
</comment>
<comment type="subcellular location">
    <subcellularLocation>
        <location evidence="2">Cytoplasm</location>
    </subcellularLocation>
</comment>
<comment type="similarity">
    <text evidence="2">Belongs to the D-alanine--D-alanine ligase family.</text>
</comment>
<evidence type="ECO:0000250" key="1"/>
<evidence type="ECO:0000255" key="2">
    <source>
        <dbReference type="HAMAP-Rule" id="MF_00047"/>
    </source>
</evidence>
<sequence>MSGIDPKRFGKVAVLLGGESAERDVSLNSGRLVLQGLRDAGIDAHPFDPAQRPLAALKDEGFVRAFNALHGGYGENGQIQGALDFYGIRYTGSGVLGSALGLDKFRTKLVWQQTGIPTPPFETVMRGDDYAARAKDIVAKLGMPLFVKPASEGSSVAVEKVKSADALPAALEEAAKHDKIVIVEKSIEGGGEYTACIAADLDLPLIKIVPAGEFYDYHAKYIANDTQYLIPCGLDAAKEAEFKRIARRAFDVLGCTDWGRADFMLDAAGNPYFLEVNTAPGMTDHSLPPKAARAVGISYSELVVKVLSLTLD</sequence>
<proteinExistence type="inferred from homology"/>
<keyword id="KW-0067">ATP-binding</keyword>
<keyword id="KW-0133">Cell shape</keyword>
<keyword id="KW-0961">Cell wall biogenesis/degradation</keyword>
<keyword id="KW-0963">Cytoplasm</keyword>
<keyword id="KW-0436">Ligase</keyword>
<keyword id="KW-0460">Magnesium</keyword>
<keyword id="KW-0464">Manganese</keyword>
<keyword id="KW-0479">Metal-binding</keyword>
<keyword id="KW-0547">Nucleotide-binding</keyword>
<keyword id="KW-0573">Peptidoglycan synthesis</keyword>
<gene>
    <name evidence="2" type="primary">ddl</name>
    <name type="ordered locus">BTH_I1120</name>
</gene>
<dbReference type="EC" id="6.3.2.4" evidence="2"/>
<dbReference type="EMBL" id="CP000086">
    <property type="protein sequence ID" value="ABC38181.1"/>
    <property type="molecule type" value="Genomic_DNA"/>
</dbReference>
<dbReference type="RefSeq" id="WP_009888783.1">
    <property type="nucleotide sequence ID" value="NZ_CP008785.1"/>
</dbReference>
<dbReference type="SMR" id="Q2SZI1"/>
<dbReference type="GeneID" id="45120872"/>
<dbReference type="KEGG" id="bte:BTH_I1120"/>
<dbReference type="HOGENOM" id="CLU_039268_1_2_4"/>
<dbReference type="UniPathway" id="UPA00219"/>
<dbReference type="Proteomes" id="UP000001930">
    <property type="component" value="Chromosome I"/>
</dbReference>
<dbReference type="GO" id="GO:0005829">
    <property type="term" value="C:cytosol"/>
    <property type="evidence" value="ECO:0007669"/>
    <property type="project" value="TreeGrafter"/>
</dbReference>
<dbReference type="GO" id="GO:0005524">
    <property type="term" value="F:ATP binding"/>
    <property type="evidence" value="ECO:0007669"/>
    <property type="project" value="UniProtKB-KW"/>
</dbReference>
<dbReference type="GO" id="GO:0008716">
    <property type="term" value="F:D-alanine-D-alanine ligase activity"/>
    <property type="evidence" value="ECO:0007669"/>
    <property type="project" value="UniProtKB-UniRule"/>
</dbReference>
<dbReference type="GO" id="GO:0046872">
    <property type="term" value="F:metal ion binding"/>
    <property type="evidence" value="ECO:0007669"/>
    <property type="project" value="UniProtKB-KW"/>
</dbReference>
<dbReference type="GO" id="GO:0071555">
    <property type="term" value="P:cell wall organization"/>
    <property type="evidence" value="ECO:0007669"/>
    <property type="project" value="UniProtKB-KW"/>
</dbReference>
<dbReference type="GO" id="GO:0009252">
    <property type="term" value="P:peptidoglycan biosynthetic process"/>
    <property type="evidence" value="ECO:0007669"/>
    <property type="project" value="UniProtKB-UniRule"/>
</dbReference>
<dbReference type="GO" id="GO:0008360">
    <property type="term" value="P:regulation of cell shape"/>
    <property type="evidence" value="ECO:0007669"/>
    <property type="project" value="UniProtKB-KW"/>
</dbReference>
<dbReference type="FunFam" id="3.30.1490.20:FF:000007">
    <property type="entry name" value="D-alanine--D-alanine ligase"/>
    <property type="match status" value="1"/>
</dbReference>
<dbReference type="FunFam" id="3.30.470.20:FF:000008">
    <property type="entry name" value="D-alanine--D-alanine ligase"/>
    <property type="match status" value="1"/>
</dbReference>
<dbReference type="FunFam" id="3.40.50.20:FF:000013">
    <property type="entry name" value="D-alanine--D-alanine ligase"/>
    <property type="match status" value="1"/>
</dbReference>
<dbReference type="Gene3D" id="3.40.50.20">
    <property type="match status" value="1"/>
</dbReference>
<dbReference type="Gene3D" id="3.30.1490.20">
    <property type="entry name" value="ATP-grasp fold, A domain"/>
    <property type="match status" value="1"/>
</dbReference>
<dbReference type="Gene3D" id="3.30.470.20">
    <property type="entry name" value="ATP-grasp fold, B domain"/>
    <property type="match status" value="1"/>
</dbReference>
<dbReference type="HAMAP" id="MF_00047">
    <property type="entry name" value="Dala_Dala_lig"/>
    <property type="match status" value="1"/>
</dbReference>
<dbReference type="InterPro" id="IPR011761">
    <property type="entry name" value="ATP-grasp"/>
</dbReference>
<dbReference type="InterPro" id="IPR013815">
    <property type="entry name" value="ATP_grasp_subdomain_1"/>
</dbReference>
<dbReference type="InterPro" id="IPR000291">
    <property type="entry name" value="D-Ala_lig_Van_CS"/>
</dbReference>
<dbReference type="InterPro" id="IPR005905">
    <property type="entry name" value="D_ala_D_ala"/>
</dbReference>
<dbReference type="InterPro" id="IPR011095">
    <property type="entry name" value="Dala_Dala_lig_C"/>
</dbReference>
<dbReference type="InterPro" id="IPR011127">
    <property type="entry name" value="Dala_Dala_lig_N"/>
</dbReference>
<dbReference type="InterPro" id="IPR016185">
    <property type="entry name" value="PreATP-grasp_dom_sf"/>
</dbReference>
<dbReference type="NCBIfam" id="TIGR01205">
    <property type="entry name" value="D_ala_D_alaTIGR"/>
    <property type="match status" value="1"/>
</dbReference>
<dbReference type="NCBIfam" id="NF002378">
    <property type="entry name" value="PRK01372.1"/>
    <property type="match status" value="1"/>
</dbReference>
<dbReference type="PANTHER" id="PTHR23132">
    <property type="entry name" value="D-ALANINE--D-ALANINE LIGASE"/>
    <property type="match status" value="1"/>
</dbReference>
<dbReference type="PANTHER" id="PTHR23132:SF23">
    <property type="entry name" value="D-ALANINE--D-ALANINE LIGASE B"/>
    <property type="match status" value="1"/>
</dbReference>
<dbReference type="Pfam" id="PF07478">
    <property type="entry name" value="Dala_Dala_lig_C"/>
    <property type="match status" value="1"/>
</dbReference>
<dbReference type="Pfam" id="PF01820">
    <property type="entry name" value="Dala_Dala_lig_N"/>
    <property type="match status" value="1"/>
</dbReference>
<dbReference type="PIRSF" id="PIRSF039102">
    <property type="entry name" value="Ddl/VanB"/>
    <property type="match status" value="1"/>
</dbReference>
<dbReference type="SUPFAM" id="SSF56059">
    <property type="entry name" value="Glutathione synthetase ATP-binding domain-like"/>
    <property type="match status" value="1"/>
</dbReference>
<dbReference type="SUPFAM" id="SSF52440">
    <property type="entry name" value="PreATP-grasp domain"/>
    <property type="match status" value="1"/>
</dbReference>
<dbReference type="PROSITE" id="PS50975">
    <property type="entry name" value="ATP_GRASP"/>
    <property type="match status" value="1"/>
</dbReference>
<dbReference type="PROSITE" id="PS00843">
    <property type="entry name" value="DALA_DALA_LIGASE_1"/>
    <property type="match status" value="1"/>
</dbReference>
<dbReference type="PROSITE" id="PS00844">
    <property type="entry name" value="DALA_DALA_LIGASE_2"/>
    <property type="match status" value="1"/>
</dbReference>
<name>DDL_BURTA</name>